<name>LRC4C_HUMAN</name>
<organism>
    <name type="scientific">Homo sapiens</name>
    <name type="common">Human</name>
    <dbReference type="NCBI Taxonomy" id="9606"/>
    <lineage>
        <taxon>Eukaryota</taxon>
        <taxon>Metazoa</taxon>
        <taxon>Chordata</taxon>
        <taxon>Craniata</taxon>
        <taxon>Vertebrata</taxon>
        <taxon>Euteleostomi</taxon>
        <taxon>Mammalia</taxon>
        <taxon>Eutheria</taxon>
        <taxon>Euarchontoglires</taxon>
        <taxon>Primates</taxon>
        <taxon>Haplorrhini</taxon>
        <taxon>Catarrhini</taxon>
        <taxon>Hominidae</taxon>
        <taxon>Homo</taxon>
    </lineage>
</organism>
<accession>Q9HCJ2</accession>
<accession>A8K0T1</accession>
<accession>Q7L0N3</accession>
<sequence length="640" mass="71950">MLNKMTLHPQQIMIGPRFNRALFDPLLVVLLALQLLVVAGLVRAQTCPSVCSCSNQFSKVICVRKNLREVPDGISTNTRLLNLHENQIQIIKVNSFKHLRHLEILQLSRNHIRTIEIGAFNGLANLNTLELFDNRLTTIPNGAFVYLSKLKELWLRNNPIESIPSYAFNRIPSLRRLDLGELKRLSYISEGAFEGLSNLRYLNLAMCNLREIPNLTPLIKLDELDLSGNHLSAIRPGSFQGLMHLQKLWMIQSQIQVIERNAFDNLQSLVEINLAHNNLTLLPHDLFTPLHHLERIHLHHNPWNCNCDILWLSWWIKDMAPSNTACCARCNTPPNLKGRYIGELDQNYFTCYAPVIVEPPADLNVTEGMAAELKCRASTSLTSVSWITPNGTVMTHGAYKVRIAVLSDGTLNFTNVTVQDTGMYTCMVSNSVGNTTASATLNVTAATTTPFSYFSTVTVETMEPSQDEARTTDNNVGPTPVVDWETTNVTTSLTPQSTRSTEKTFTIPVTDINSGIPGIDEVMKTTKIIIGCFVAITLMAAVMLVIFYKMRKQHHRQNHHAPTRTVEIINVDDEITGDTPMESHLPMPAIEHEHLNHYNSYKSPFNHTTTVNTINSIHSSVHEPLLIRMNSKDNVQETQI</sequence>
<comment type="function">
    <text evidence="5">May promote neurite outgrowth of developing thalamic neurons.</text>
</comment>
<comment type="subunit">
    <text evidence="5 6">Interacts with NTNG1 and WHRN.</text>
</comment>
<comment type="interaction">
    <interactant intactId="EBI-3925442">
        <id>Q9HCJ2</id>
    </interactant>
    <interactant intactId="EBI-11522760">
        <id>Q6RW13-2</id>
        <label>AGTRAP</label>
    </interactant>
    <organismsDiffer>false</organismsDiffer>
    <experiments>3</experiments>
</comment>
<comment type="interaction">
    <interactant intactId="EBI-3925442">
        <id>Q9HCJ2</id>
    </interactant>
    <interactant intactId="EBI-3922513">
        <id>O95393</id>
        <label>BMP10</label>
    </interactant>
    <organismsDiffer>false</organismsDiffer>
    <experiments>3</experiments>
</comment>
<comment type="interaction">
    <interactant intactId="EBI-3925442">
        <id>Q9HCJ2</id>
    </interactant>
    <interactant intactId="EBI-12244618">
        <id>Q6PL45-2</id>
        <label>BRICD5</label>
    </interactant>
    <organismsDiffer>false</organismsDiffer>
    <experiments>3</experiments>
</comment>
<comment type="interaction">
    <interactant intactId="EBI-3925442">
        <id>Q9HCJ2</id>
    </interactant>
    <interactant intactId="EBI-12256978">
        <id>Q8N6F1-2</id>
        <label>CLDN19</label>
    </interactant>
    <organismsDiffer>false</organismsDiffer>
    <experiments>3</experiments>
</comment>
<comment type="interaction">
    <interactant intactId="EBI-3925442">
        <id>Q9HCJ2</id>
    </interactant>
    <interactant intactId="EBI-11996768">
        <id>Q8NC01</id>
        <label>CLEC1A</label>
    </interactant>
    <organismsDiffer>false</organismsDiffer>
    <experiments>3</experiments>
</comment>
<comment type="interaction">
    <interactant intactId="EBI-3925442">
        <id>Q9HCJ2</id>
    </interactant>
    <interactant intactId="EBI-2114729">
        <id>Q6UXB4</id>
        <label>CLEC4G</label>
    </interactant>
    <organismsDiffer>false</organismsDiffer>
    <experiments>3</experiments>
</comment>
<comment type="interaction">
    <interactant intactId="EBI-3925442">
        <id>Q9HCJ2</id>
    </interactant>
    <interactant intactId="EBI-11522780">
        <id>Q96DZ9-2</id>
        <label>CMTM5</label>
    </interactant>
    <organismsDiffer>false</organismsDiffer>
    <experiments>3</experiments>
</comment>
<comment type="interaction">
    <interactant intactId="EBI-3925442">
        <id>Q9HCJ2</id>
    </interactant>
    <interactant intactId="EBI-8645574">
        <id>Q9UPQ8</id>
        <label>DOLK</label>
    </interactant>
    <organismsDiffer>false</organismsDiffer>
    <experiments>5</experiments>
</comment>
<comment type="interaction">
    <interactant intactId="EBI-3925442">
        <id>Q9HCJ2</id>
    </interactant>
    <interactant intactId="EBI-10305400">
        <id>Q8N682</id>
        <label>DRAM1</label>
    </interactant>
    <organismsDiffer>false</organismsDiffer>
    <experiments>3</experiments>
</comment>
<comment type="interaction">
    <interactant intactId="EBI-3925442">
        <id>Q9HCJ2</id>
    </interactant>
    <interactant intactId="EBI-3907816">
        <id>P54852</id>
        <label>EMP3</label>
    </interactant>
    <organismsDiffer>false</organismsDiffer>
    <experiments>3</experiments>
</comment>
<comment type="interaction">
    <interactant intactId="EBI-3925442">
        <id>Q9HCJ2</id>
    </interactant>
    <interactant intactId="EBI-3905204">
        <id>P29033</id>
        <label>GJB2</label>
    </interactant>
    <organismsDiffer>false</organismsDiffer>
    <experiments>3</experiments>
</comment>
<comment type="interaction">
    <interactant intactId="EBI-3925442">
        <id>Q9HCJ2</id>
    </interactant>
    <interactant intactId="EBI-750776">
        <id>O95214</id>
        <label>LEPROTL1</label>
    </interactant>
    <organismsDiffer>false</organismsDiffer>
    <experiments>3</experiments>
</comment>
<comment type="interaction">
    <interactant intactId="EBI-3925442">
        <id>Q9HCJ2</id>
    </interactant>
    <interactant intactId="EBI-2820517">
        <id>Q8TAF8</id>
        <label>LHFPL5</label>
    </interactant>
    <organismsDiffer>false</organismsDiffer>
    <experiments>3</experiments>
</comment>
<comment type="interaction">
    <interactant intactId="EBI-3925442">
        <id>Q9HCJ2</id>
    </interactant>
    <interactant intactId="EBI-8449636">
        <id>P30301</id>
        <label>MIP</label>
    </interactant>
    <organismsDiffer>false</organismsDiffer>
    <experiments>3</experiments>
</comment>
<comment type="interaction">
    <interactant intactId="EBI-3925442">
        <id>Q9HCJ2</id>
    </interactant>
    <interactant intactId="EBI-7444396">
        <id>Q9Y2I2</id>
        <label>NTNG1</label>
    </interactant>
    <organismsDiffer>false</organismsDiffer>
    <experiments>4</experiments>
</comment>
<comment type="interaction">
    <interactant intactId="EBI-3925442">
        <id>Q9HCJ2</id>
    </interactant>
    <interactant intactId="EBI-750795">
        <id>Q96CW9</id>
        <label>NTNG2</label>
    </interactant>
    <organismsDiffer>false</organismsDiffer>
    <experiments>2</experiments>
</comment>
<comment type="interaction">
    <interactant intactId="EBI-3925442">
        <id>Q9HCJ2</id>
    </interactant>
    <interactant intactId="EBI-12092917">
        <id>Q9UHJ9-5</id>
        <label>PGAP2</label>
    </interactant>
    <organismsDiffer>false</organismsDiffer>
    <experiments>3</experiments>
</comment>
<comment type="interaction">
    <interactant intactId="EBI-3925442">
        <id>Q9HCJ2</id>
    </interactant>
    <interactant intactId="EBI-608347">
        <id>Q04941</id>
        <label>PLP2</label>
    </interactant>
    <organismsDiffer>false</organismsDiffer>
    <experiments>3</experiments>
</comment>
<comment type="interaction">
    <interactant intactId="EBI-3925442">
        <id>Q9HCJ2</id>
    </interactant>
    <interactant intactId="EBI-17284533">
        <id>A2A2V5</id>
        <label>SERTM1</label>
    </interactant>
    <organismsDiffer>false</organismsDiffer>
    <experiments>3</experiments>
</comment>
<comment type="interaction">
    <interactant intactId="EBI-3925442">
        <id>Q9HCJ2</id>
    </interactant>
    <interactant intactId="EBI-12188413">
        <id>B2RUZ4</id>
        <label>SMIM1</label>
    </interactant>
    <organismsDiffer>false</organismsDiffer>
    <experiments>3</experiments>
</comment>
<comment type="interaction">
    <interactant intactId="EBI-3925442">
        <id>Q9HCJ2</id>
    </interactant>
    <interactant intactId="EBI-10244848">
        <id>Q5SQN1</id>
        <label>SNAP47</label>
    </interactant>
    <organismsDiffer>false</organismsDiffer>
    <experiments>3</experiments>
</comment>
<comment type="interaction">
    <interactant intactId="EBI-3925442">
        <id>Q9HCJ2</id>
    </interactant>
    <interactant intactId="EBI-714206">
        <id>Q13190</id>
        <label>STX5</label>
    </interactant>
    <organismsDiffer>false</organismsDiffer>
    <experiments>3</experiments>
</comment>
<comment type="interaction">
    <interactant intactId="EBI-3925442">
        <id>Q9HCJ2</id>
    </interactant>
    <interactant intactId="EBI-10304067">
        <id>Q9GZX9</id>
        <label>TWSG1</label>
    </interactant>
    <organismsDiffer>false</organismsDiffer>
    <experiments>3</experiments>
</comment>
<comment type="interaction">
    <interactant intactId="EBI-3925442">
        <id>Q9HCJ2</id>
    </interactant>
    <interactant intactId="EBI-12190699">
        <id>Q6UX27-3</id>
        <label>VSTM1</label>
    </interactant>
    <organismsDiffer>false</organismsDiffer>
    <experiments>3</experiments>
</comment>
<comment type="interaction">
    <interactant intactId="EBI-3925442">
        <id>Q9HCJ2</id>
    </interactant>
    <interactant intactId="EBI-751210">
        <id>Q96EC8</id>
        <label>YIPF6</label>
    </interactant>
    <organismsDiffer>false</organismsDiffer>
    <experiments>3</experiments>
</comment>
<comment type="subcellular location">
    <subcellularLocation>
        <location evidence="5 6">Postsynaptic cell membrane</location>
        <topology evidence="5 6">Single-pass type I membrane protein</topology>
    </subcellularLocation>
</comment>
<comment type="tissue specificity">
    <text evidence="5">Highly expressed in the cerebral cortex, including frontal, parietal and occipital lobes. Putamen, amygdala, hippocampus and medulla oblongata show moderate expression. Caudate nucleus and thalamus express small amounts, whereas other brain regions show very weak or no expression.</text>
</comment>
<comment type="domain">
    <text>The LRR region is both necessary and sufficient for the interaction with NTNG1.</text>
</comment>
<protein>
    <recommendedName>
        <fullName>Leucine-rich repeat-containing protein 4C</fullName>
    </recommendedName>
    <alternativeName>
        <fullName>Netrin-G1 ligand</fullName>
        <shortName>NGL-1</shortName>
    </alternativeName>
</protein>
<keyword id="KW-0002">3D-structure</keyword>
<keyword id="KW-1003">Cell membrane</keyword>
<keyword id="KW-1015">Disulfide bond</keyword>
<keyword id="KW-0393">Immunoglobulin domain</keyword>
<keyword id="KW-0433">Leucine-rich repeat</keyword>
<keyword id="KW-0472">Membrane</keyword>
<keyword id="KW-0597">Phosphoprotein</keyword>
<keyword id="KW-0628">Postsynaptic cell membrane</keyword>
<keyword id="KW-1267">Proteomics identification</keyword>
<keyword id="KW-1185">Reference proteome</keyword>
<keyword id="KW-0677">Repeat</keyword>
<keyword id="KW-0732">Signal</keyword>
<keyword id="KW-0770">Synapse</keyword>
<keyword id="KW-0812">Transmembrane</keyword>
<keyword id="KW-1133">Transmembrane helix</keyword>
<dbReference type="EMBL" id="AB046800">
    <property type="protein sequence ID" value="BAB13406.1"/>
    <property type="molecule type" value="mRNA"/>
</dbReference>
<dbReference type="EMBL" id="AY358293">
    <property type="protein sequence ID" value="AAQ88660.1"/>
    <property type="molecule type" value="mRNA"/>
</dbReference>
<dbReference type="EMBL" id="AK289646">
    <property type="protein sequence ID" value="BAF82335.1"/>
    <property type="molecule type" value="mRNA"/>
</dbReference>
<dbReference type="EMBL" id="CH471064">
    <property type="protein sequence ID" value="EAW68107.1"/>
    <property type="molecule type" value="Genomic_DNA"/>
</dbReference>
<dbReference type="EMBL" id="BC041374">
    <property type="protein sequence ID" value="AAH41374.3"/>
    <property type="molecule type" value="mRNA"/>
</dbReference>
<dbReference type="CCDS" id="CCDS31464.1"/>
<dbReference type="RefSeq" id="NP_001245348.1">
    <property type="nucleotide sequence ID" value="NM_001258419.2"/>
</dbReference>
<dbReference type="RefSeq" id="NP_065980.1">
    <property type="nucleotide sequence ID" value="NM_020929.3"/>
</dbReference>
<dbReference type="RefSeq" id="XP_011518540.1">
    <property type="nucleotide sequence ID" value="XM_011520238.4"/>
</dbReference>
<dbReference type="RefSeq" id="XP_011518541.1">
    <property type="nucleotide sequence ID" value="XM_011520239.4"/>
</dbReference>
<dbReference type="RefSeq" id="XP_011518542.1">
    <property type="nucleotide sequence ID" value="XM_011520240.4"/>
</dbReference>
<dbReference type="RefSeq" id="XP_011518543.1">
    <property type="nucleotide sequence ID" value="XM_011520241.4"/>
</dbReference>
<dbReference type="RefSeq" id="XP_011518544.1">
    <property type="nucleotide sequence ID" value="XM_011520242.4"/>
</dbReference>
<dbReference type="RefSeq" id="XP_011518545.1">
    <property type="nucleotide sequence ID" value="XM_011520243.4"/>
</dbReference>
<dbReference type="RefSeq" id="XP_011518546.1">
    <property type="nucleotide sequence ID" value="XM_011520244.4"/>
</dbReference>
<dbReference type="RefSeq" id="XP_016873559.1">
    <property type="nucleotide sequence ID" value="XM_017018070.3"/>
</dbReference>
<dbReference type="RefSeq" id="XP_016873560.1">
    <property type="nucleotide sequence ID" value="XM_017018071.3"/>
</dbReference>
<dbReference type="RefSeq" id="XP_016873561.1">
    <property type="nucleotide sequence ID" value="XM_017018072.3"/>
</dbReference>
<dbReference type="RefSeq" id="XP_016873562.1">
    <property type="nucleotide sequence ID" value="XM_017018073.3"/>
</dbReference>
<dbReference type="RefSeq" id="XP_016873563.1">
    <property type="nucleotide sequence ID" value="XM_017018074.3"/>
</dbReference>
<dbReference type="RefSeq" id="XP_016873564.1">
    <property type="nucleotide sequence ID" value="XM_017018075.3"/>
</dbReference>
<dbReference type="RefSeq" id="XP_016873565.1">
    <property type="nucleotide sequence ID" value="XM_017018076.3"/>
</dbReference>
<dbReference type="RefSeq" id="XP_016873566.1">
    <property type="nucleotide sequence ID" value="XM_017018077.3"/>
</dbReference>
<dbReference type="RefSeq" id="XP_016873567.1">
    <property type="nucleotide sequence ID" value="XM_017018078.3"/>
</dbReference>
<dbReference type="RefSeq" id="XP_016873568.1">
    <property type="nucleotide sequence ID" value="XM_017018079.3"/>
</dbReference>
<dbReference type="RefSeq" id="XP_047283305.1">
    <property type="nucleotide sequence ID" value="XM_047427349.1"/>
</dbReference>
<dbReference type="RefSeq" id="XP_047283306.1">
    <property type="nucleotide sequence ID" value="XM_047427350.1"/>
</dbReference>
<dbReference type="RefSeq" id="XP_047283307.1">
    <property type="nucleotide sequence ID" value="XM_047427351.1"/>
</dbReference>
<dbReference type="RefSeq" id="XP_047283308.1">
    <property type="nucleotide sequence ID" value="XM_047427352.1"/>
</dbReference>
<dbReference type="RefSeq" id="XP_054225481.1">
    <property type="nucleotide sequence ID" value="XM_054369506.1"/>
</dbReference>
<dbReference type="RefSeq" id="XP_054225482.1">
    <property type="nucleotide sequence ID" value="XM_054369507.1"/>
</dbReference>
<dbReference type="RefSeq" id="XP_054225483.1">
    <property type="nucleotide sequence ID" value="XM_054369508.1"/>
</dbReference>
<dbReference type="RefSeq" id="XP_054225484.1">
    <property type="nucleotide sequence ID" value="XM_054369509.1"/>
</dbReference>
<dbReference type="RefSeq" id="XP_054225485.1">
    <property type="nucleotide sequence ID" value="XM_054369510.1"/>
</dbReference>
<dbReference type="RefSeq" id="XP_054225486.1">
    <property type="nucleotide sequence ID" value="XM_054369511.1"/>
</dbReference>
<dbReference type="RefSeq" id="XP_054225487.1">
    <property type="nucleotide sequence ID" value="XM_054369512.1"/>
</dbReference>
<dbReference type="RefSeq" id="XP_054225488.1">
    <property type="nucleotide sequence ID" value="XM_054369513.1"/>
</dbReference>
<dbReference type="RefSeq" id="XP_054225489.1">
    <property type="nucleotide sequence ID" value="XM_054369514.1"/>
</dbReference>
<dbReference type="RefSeq" id="XP_054225490.1">
    <property type="nucleotide sequence ID" value="XM_054369515.1"/>
</dbReference>
<dbReference type="RefSeq" id="XP_054225491.1">
    <property type="nucleotide sequence ID" value="XM_054369516.1"/>
</dbReference>
<dbReference type="RefSeq" id="XP_054225492.1">
    <property type="nucleotide sequence ID" value="XM_054369517.1"/>
</dbReference>
<dbReference type="RefSeq" id="XP_054225493.1">
    <property type="nucleotide sequence ID" value="XM_054369518.1"/>
</dbReference>
<dbReference type="RefSeq" id="XP_054225494.1">
    <property type="nucleotide sequence ID" value="XM_054369519.1"/>
</dbReference>
<dbReference type="RefSeq" id="XP_054225495.1">
    <property type="nucleotide sequence ID" value="XM_054369520.1"/>
</dbReference>
<dbReference type="RefSeq" id="XP_054225496.1">
    <property type="nucleotide sequence ID" value="XM_054369521.1"/>
</dbReference>
<dbReference type="RefSeq" id="XP_054225497.1">
    <property type="nucleotide sequence ID" value="XM_054369522.1"/>
</dbReference>
<dbReference type="RefSeq" id="XP_054225498.1">
    <property type="nucleotide sequence ID" value="XM_054369523.1"/>
</dbReference>
<dbReference type="RefSeq" id="XP_054225499.1">
    <property type="nucleotide sequence ID" value="XM_054369524.1"/>
</dbReference>
<dbReference type="RefSeq" id="XP_054225500.1">
    <property type="nucleotide sequence ID" value="XM_054369525.1"/>
</dbReference>
<dbReference type="RefSeq" id="XP_054225501.1">
    <property type="nucleotide sequence ID" value="XM_054369526.1"/>
</dbReference>
<dbReference type="RefSeq" id="XP_054225502.1">
    <property type="nucleotide sequence ID" value="XM_054369527.1"/>
</dbReference>
<dbReference type="RefSeq" id="XP_054225503.1">
    <property type="nucleotide sequence ID" value="XM_054369528.1"/>
</dbReference>
<dbReference type="RefSeq" id="XP_054225504.1">
    <property type="nucleotide sequence ID" value="XM_054369529.1"/>
</dbReference>
<dbReference type="PDB" id="3ZYJ">
    <property type="method" value="X-ray"/>
    <property type="resolution" value="3.25 A"/>
    <property type="chains" value="A/C=44-444"/>
</dbReference>
<dbReference type="PDBsum" id="3ZYJ"/>
<dbReference type="SMR" id="Q9HCJ2"/>
<dbReference type="BioGRID" id="121715">
    <property type="interactions" value="59"/>
</dbReference>
<dbReference type="FunCoup" id="Q9HCJ2">
    <property type="interactions" value="371"/>
</dbReference>
<dbReference type="IntAct" id="Q9HCJ2">
    <property type="interactions" value="52"/>
</dbReference>
<dbReference type="MINT" id="Q9HCJ2"/>
<dbReference type="STRING" id="9606.ENSP00000278198"/>
<dbReference type="GlyGen" id="Q9HCJ2">
    <property type="glycosylation" value="2 sites, 1 N-linked glycan (1 site)"/>
</dbReference>
<dbReference type="iPTMnet" id="Q9HCJ2"/>
<dbReference type="PhosphoSitePlus" id="Q9HCJ2"/>
<dbReference type="BioMuta" id="LRRC4C"/>
<dbReference type="DMDM" id="57012973"/>
<dbReference type="jPOST" id="Q9HCJ2"/>
<dbReference type="MassIVE" id="Q9HCJ2"/>
<dbReference type="PaxDb" id="9606-ENSP00000278198"/>
<dbReference type="PeptideAtlas" id="Q9HCJ2"/>
<dbReference type="ProteomicsDB" id="81737"/>
<dbReference type="Antibodypedia" id="26031">
    <property type="antibodies" value="201 antibodies from 26 providers"/>
</dbReference>
<dbReference type="DNASU" id="57689"/>
<dbReference type="Ensembl" id="ENST00000278198.2">
    <property type="protein sequence ID" value="ENSP00000278198.1"/>
    <property type="gene ID" value="ENSG00000148948.8"/>
</dbReference>
<dbReference type="Ensembl" id="ENST00000527150.5">
    <property type="protein sequence ID" value="ENSP00000436976.1"/>
    <property type="gene ID" value="ENSG00000148948.8"/>
</dbReference>
<dbReference type="Ensembl" id="ENST00000528697.6">
    <property type="protein sequence ID" value="ENSP00000437132.1"/>
    <property type="gene ID" value="ENSG00000148948.8"/>
</dbReference>
<dbReference type="Ensembl" id="ENST00000530763.5">
    <property type="protein sequence ID" value="ENSP00000434761.1"/>
    <property type="gene ID" value="ENSG00000148948.8"/>
</dbReference>
<dbReference type="Ensembl" id="ENST00000619527.4">
    <property type="protein sequence ID" value="ENSP00000480903.1"/>
    <property type="gene ID" value="ENSG00000148948.8"/>
</dbReference>
<dbReference type="GeneID" id="57689"/>
<dbReference type="KEGG" id="hsa:57689"/>
<dbReference type="MANE-Select" id="ENST00000528697.6">
    <property type="protein sequence ID" value="ENSP00000437132.1"/>
    <property type="RefSeq nucleotide sequence ID" value="NM_001258419.2"/>
    <property type="RefSeq protein sequence ID" value="NP_001245348.1"/>
</dbReference>
<dbReference type="UCSC" id="uc031pzt.2">
    <property type="organism name" value="human"/>
</dbReference>
<dbReference type="AGR" id="HGNC:29317"/>
<dbReference type="CTD" id="57689"/>
<dbReference type="DisGeNET" id="57689"/>
<dbReference type="GeneCards" id="LRRC4C"/>
<dbReference type="HGNC" id="HGNC:29317">
    <property type="gene designation" value="LRRC4C"/>
</dbReference>
<dbReference type="HPA" id="ENSG00000148948">
    <property type="expression patterns" value="Group enriched (brain, retina)"/>
</dbReference>
<dbReference type="MIM" id="608817">
    <property type="type" value="gene"/>
</dbReference>
<dbReference type="neXtProt" id="NX_Q9HCJ2"/>
<dbReference type="OpenTargets" id="ENSG00000148948"/>
<dbReference type="PharmGKB" id="PA142671534"/>
<dbReference type="VEuPathDB" id="HostDB:ENSG00000148948"/>
<dbReference type="eggNOG" id="KOG0619">
    <property type="taxonomic scope" value="Eukaryota"/>
</dbReference>
<dbReference type="GeneTree" id="ENSGT00940000157405"/>
<dbReference type="HOGENOM" id="CLU_000288_18_24_1"/>
<dbReference type="InParanoid" id="Q9HCJ2"/>
<dbReference type="OMA" id="NVDEDCG"/>
<dbReference type="OrthoDB" id="28057at2759"/>
<dbReference type="PAN-GO" id="Q9HCJ2">
    <property type="GO annotations" value="7 GO annotations based on evolutionary models"/>
</dbReference>
<dbReference type="PhylomeDB" id="Q9HCJ2"/>
<dbReference type="TreeFam" id="TF324303"/>
<dbReference type="PathwayCommons" id="Q9HCJ2"/>
<dbReference type="SignaLink" id="Q9HCJ2"/>
<dbReference type="SIGNOR" id="Q9HCJ2"/>
<dbReference type="BioGRID-ORCS" id="57689">
    <property type="hits" value="11 hits in 1143 CRISPR screens"/>
</dbReference>
<dbReference type="ChiTaRS" id="LRRC4C">
    <property type="organism name" value="human"/>
</dbReference>
<dbReference type="EvolutionaryTrace" id="Q9HCJ2"/>
<dbReference type="GenomeRNAi" id="57689"/>
<dbReference type="Pharos" id="Q9HCJ2">
    <property type="development level" value="Tbio"/>
</dbReference>
<dbReference type="PRO" id="PR:Q9HCJ2"/>
<dbReference type="Proteomes" id="UP000005640">
    <property type="component" value="Chromosome 11"/>
</dbReference>
<dbReference type="RNAct" id="Q9HCJ2">
    <property type="molecule type" value="protein"/>
</dbReference>
<dbReference type="Bgee" id="ENSG00000148948">
    <property type="expression patterns" value="Expressed in middle temporal gyrus and 155 other cell types or tissues"/>
</dbReference>
<dbReference type="ExpressionAtlas" id="Q9HCJ2">
    <property type="expression patterns" value="baseline and differential"/>
</dbReference>
<dbReference type="GO" id="GO:0005615">
    <property type="term" value="C:extracellular space"/>
    <property type="evidence" value="ECO:0007005"/>
    <property type="project" value="UniProtKB"/>
</dbReference>
<dbReference type="GO" id="GO:0098978">
    <property type="term" value="C:glutamatergic synapse"/>
    <property type="evidence" value="ECO:0000318"/>
    <property type="project" value="GO_Central"/>
</dbReference>
<dbReference type="GO" id="GO:0016020">
    <property type="term" value="C:membrane"/>
    <property type="evidence" value="ECO:0000314"/>
    <property type="project" value="UniProtKB"/>
</dbReference>
<dbReference type="GO" id="GO:0005886">
    <property type="term" value="C:plasma membrane"/>
    <property type="evidence" value="ECO:0000318"/>
    <property type="project" value="GO_Central"/>
</dbReference>
<dbReference type="GO" id="GO:0098839">
    <property type="term" value="C:postsynaptic density membrane"/>
    <property type="evidence" value="ECO:0000318"/>
    <property type="project" value="GO_Central"/>
</dbReference>
<dbReference type="GO" id="GO:0098685">
    <property type="term" value="C:Schaffer collateral - CA1 synapse"/>
    <property type="evidence" value="ECO:0007669"/>
    <property type="project" value="Ensembl"/>
</dbReference>
<dbReference type="GO" id="GO:0050839">
    <property type="term" value="F:cell adhesion molecule binding"/>
    <property type="evidence" value="ECO:0000353"/>
    <property type="project" value="SynGO-UCL"/>
</dbReference>
<dbReference type="GO" id="GO:0098632">
    <property type="term" value="F:cell-cell adhesion mediator activity"/>
    <property type="evidence" value="ECO:0000316"/>
    <property type="project" value="SynGO-UCL"/>
</dbReference>
<dbReference type="GO" id="GO:0050804">
    <property type="term" value="P:modulation of chemical synaptic transmission"/>
    <property type="evidence" value="ECO:0000318"/>
    <property type="project" value="GO_Central"/>
</dbReference>
<dbReference type="GO" id="GO:0050770">
    <property type="term" value="P:regulation of axonogenesis"/>
    <property type="evidence" value="ECO:0000314"/>
    <property type="project" value="UniProtKB"/>
</dbReference>
<dbReference type="GO" id="GO:0099560">
    <property type="term" value="P:synaptic membrane adhesion"/>
    <property type="evidence" value="ECO:0000316"/>
    <property type="project" value="SynGO-UCL"/>
</dbReference>
<dbReference type="FunFam" id="3.80.10.10:FF:000012">
    <property type="entry name" value="Leucine rich repeat containing 4"/>
    <property type="match status" value="1"/>
</dbReference>
<dbReference type="FunFam" id="2.60.40.10:FF:000076">
    <property type="entry name" value="Leucine-rich repeat and Ig domain-containing 4"/>
    <property type="match status" value="1"/>
</dbReference>
<dbReference type="Gene3D" id="2.60.40.10">
    <property type="entry name" value="Immunoglobulins"/>
    <property type="match status" value="1"/>
</dbReference>
<dbReference type="Gene3D" id="3.80.10.10">
    <property type="entry name" value="Ribonuclease Inhibitor"/>
    <property type="match status" value="1"/>
</dbReference>
<dbReference type="InterPro" id="IPR007110">
    <property type="entry name" value="Ig-like_dom"/>
</dbReference>
<dbReference type="InterPro" id="IPR036179">
    <property type="entry name" value="Ig-like_dom_sf"/>
</dbReference>
<dbReference type="InterPro" id="IPR013783">
    <property type="entry name" value="Ig-like_fold"/>
</dbReference>
<dbReference type="InterPro" id="IPR013098">
    <property type="entry name" value="Ig_I-set"/>
</dbReference>
<dbReference type="InterPro" id="IPR003599">
    <property type="entry name" value="Ig_sub"/>
</dbReference>
<dbReference type="InterPro" id="IPR003598">
    <property type="entry name" value="Ig_sub2"/>
</dbReference>
<dbReference type="InterPro" id="IPR013106">
    <property type="entry name" value="Ig_V-set"/>
</dbReference>
<dbReference type="InterPro" id="IPR001611">
    <property type="entry name" value="Leu-rich_rpt"/>
</dbReference>
<dbReference type="InterPro" id="IPR003591">
    <property type="entry name" value="Leu-rich_rpt_typical-subtyp"/>
</dbReference>
<dbReference type="InterPro" id="IPR032675">
    <property type="entry name" value="LRR_dom_sf"/>
</dbReference>
<dbReference type="InterPro" id="IPR050541">
    <property type="entry name" value="LRR_TM_domain-containing"/>
</dbReference>
<dbReference type="InterPro" id="IPR000372">
    <property type="entry name" value="LRRNT"/>
</dbReference>
<dbReference type="PANTHER" id="PTHR24369">
    <property type="entry name" value="ANTIGEN BSP, PUTATIVE-RELATED"/>
    <property type="match status" value="1"/>
</dbReference>
<dbReference type="PANTHER" id="PTHR24369:SF8">
    <property type="entry name" value="LEUCINE-RICH REPEAT-CONTAINING PROTEIN 4C"/>
    <property type="match status" value="1"/>
</dbReference>
<dbReference type="Pfam" id="PF07679">
    <property type="entry name" value="I-set"/>
    <property type="match status" value="1"/>
</dbReference>
<dbReference type="Pfam" id="PF00560">
    <property type="entry name" value="LRR_1"/>
    <property type="match status" value="1"/>
</dbReference>
<dbReference type="Pfam" id="PF13855">
    <property type="entry name" value="LRR_8"/>
    <property type="match status" value="2"/>
</dbReference>
<dbReference type="SMART" id="SM00409">
    <property type="entry name" value="IG"/>
    <property type="match status" value="1"/>
</dbReference>
<dbReference type="SMART" id="SM00408">
    <property type="entry name" value="IGc2"/>
    <property type="match status" value="1"/>
</dbReference>
<dbReference type="SMART" id="SM00406">
    <property type="entry name" value="IGv"/>
    <property type="match status" value="1"/>
</dbReference>
<dbReference type="SMART" id="SM00369">
    <property type="entry name" value="LRR_TYP"/>
    <property type="match status" value="8"/>
</dbReference>
<dbReference type="SMART" id="SM00013">
    <property type="entry name" value="LRRNT"/>
    <property type="match status" value="1"/>
</dbReference>
<dbReference type="SUPFAM" id="SSF48726">
    <property type="entry name" value="Immunoglobulin"/>
    <property type="match status" value="1"/>
</dbReference>
<dbReference type="SUPFAM" id="SSF52058">
    <property type="entry name" value="L domain-like"/>
    <property type="match status" value="1"/>
</dbReference>
<dbReference type="PROSITE" id="PS50835">
    <property type="entry name" value="IG_LIKE"/>
    <property type="match status" value="1"/>
</dbReference>
<dbReference type="PROSITE" id="PS51450">
    <property type="entry name" value="LRR"/>
    <property type="match status" value="7"/>
</dbReference>
<reference key="1">
    <citation type="journal article" date="2000" name="DNA Res.">
        <title>Prediction of the coding sequences of unidentified human genes. XVIII. The complete sequences of 100 new cDNA clones from brain which code for large proteins in vitro.</title>
        <authorList>
            <person name="Nagase T."/>
            <person name="Kikuno R."/>
            <person name="Nakayama M."/>
            <person name="Hirosawa M."/>
            <person name="Ohara O."/>
        </authorList>
    </citation>
    <scope>NUCLEOTIDE SEQUENCE [LARGE SCALE MRNA]</scope>
    <source>
        <tissue>Brain</tissue>
    </source>
</reference>
<reference key="2">
    <citation type="journal article" date="2003" name="Genome Res.">
        <title>The secreted protein discovery initiative (SPDI), a large-scale effort to identify novel human secreted and transmembrane proteins: a bioinformatics assessment.</title>
        <authorList>
            <person name="Clark H.F."/>
            <person name="Gurney A.L."/>
            <person name="Abaya E."/>
            <person name="Baker K."/>
            <person name="Baldwin D.T."/>
            <person name="Brush J."/>
            <person name="Chen J."/>
            <person name="Chow B."/>
            <person name="Chui C."/>
            <person name="Crowley C."/>
            <person name="Currell B."/>
            <person name="Deuel B."/>
            <person name="Dowd P."/>
            <person name="Eaton D."/>
            <person name="Foster J.S."/>
            <person name="Grimaldi C."/>
            <person name="Gu Q."/>
            <person name="Hass P.E."/>
            <person name="Heldens S."/>
            <person name="Huang A."/>
            <person name="Kim H.S."/>
            <person name="Klimowski L."/>
            <person name="Jin Y."/>
            <person name="Johnson S."/>
            <person name="Lee J."/>
            <person name="Lewis L."/>
            <person name="Liao D."/>
            <person name="Mark M.R."/>
            <person name="Robbie E."/>
            <person name="Sanchez C."/>
            <person name="Schoenfeld J."/>
            <person name="Seshagiri S."/>
            <person name="Simmons L."/>
            <person name="Singh J."/>
            <person name="Smith V."/>
            <person name="Stinson J."/>
            <person name="Vagts A."/>
            <person name="Vandlen R.L."/>
            <person name="Watanabe C."/>
            <person name="Wieand D."/>
            <person name="Woods K."/>
            <person name="Xie M.-H."/>
            <person name="Yansura D.G."/>
            <person name="Yi S."/>
            <person name="Yu G."/>
            <person name="Yuan J."/>
            <person name="Zhang M."/>
            <person name="Zhang Z."/>
            <person name="Goddard A.D."/>
            <person name="Wood W.I."/>
            <person name="Godowski P.J."/>
            <person name="Gray A.M."/>
        </authorList>
    </citation>
    <scope>NUCLEOTIDE SEQUENCE [LARGE SCALE MRNA]</scope>
</reference>
<reference key="3">
    <citation type="journal article" date="2004" name="Nat. Genet.">
        <title>Complete sequencing and characterization of 21,243 full-length human cDNAs.</title>
        <authorList>
            <person name="Ota T."/>
            <person name="Suzuki Y."/>
            <person name="Nishikawa T."/>
            <person name="Otsuki T."/>
            <person name="Sugiyama T."/>
            <person name="Irie R."/>
            <person name="Wakamatsu A."/>
            <person name="Hayashi K."/>
            <person name="Sato H."/>
            <person name="Nagai K."/>
            <person name="Kimura K."/>
            <person name="Makita H."/>
            <person name="Sekine M."/>
            <person name="Obayashi M."/>
            <person name="Nishi T."/>
            <person name="Shibahara T."/>
            <person name="Tanaka T."/>
            <person name="Ishii S."/>
            <person name="Yamamoto J."/>
            <person name="Saito K."/>
            <person name="Kawai Y."/>
            <person name="Isono Y."/>
            <person name="Nakamura Y."/>
            <person name="Nagahari K."/>
            <person name="Murakami K."/>
            <person name="Yasuda T."/>
            <person name="Iwayanagi T."/>
            <person name="Wagatsuma M."/>
            <person name="Shiratori A."/>
            <person name="Sudo H."/>
            <person name="Hosoiri T."/>
            <person name="Kaku Y."/>
            <person name="Kodaira H."/>
            <person name="Kondo H."/>
            <person name="Sugawara M."/>
            <person name="Takahashi M."/>
            <person name="Kanda K."/>
            <person name="Yokoi T."/>
            <person name="Furuya T."/>
            <person name="Kikkawa E."/>
            <person name="Omura Y."/>
            <person name="Abe K."/>
            <person name="Kamihara K."/>
            <person name="Katsuta N."/>
            <person name="Sato K."/>
            <person name="Tanikawa M."/>
            <person name="Yamazaki M."/>
            <person name="Ninomiya K."/>
            <person name="Ishibashi T."/>
            <person name="Yamashita H."/>
            <person name="Murakawa K."/>
            <person name="Fujimori K."/>
            <person name="Tanai H."/>
            <person name="Kimata M."/>
            <person name="Watanabe M."/>
            <person name="Hiraoka S."/>
            <person name="Chiba Y."/>
            <person name="Ishida S."/>
            <person name="Ono Y."/>
            <person name="Takiguchi S."/>
            <person name="Watanabe S."/>
            <person name="Yosida M."/>
            <person name="Hotuta T."/>
            <person name="Kusano J."/>
            <person name="Kanehori K."/>
            <person name="Takahashi-Fujii A."/>
            <person name="Hara H."/>
            <person name="Tanase T.-O."/>
            <person name="Nomura Y."/>
            <person name="Togiya S."/>
            <person name="Komai F."/>
            <person name="Hara R."/>
            <person name="Takeuchi K."/>
            <person name="Arita M."/>
            <person name="Imose N."/>
            <person name="Musashino K."/>
            <person name="Yuuki H."/>
            <person name="Oshima A."/>
            <person name="Sasaki N."/>
            <person name="Aotsuka S."/>
            <person name="Yoshikawa Y."/>
            <person name="Matsunawa H."/>
            <person name="Ichihara T."/>
            <person name="Shiohata N."/>
            <person name="Sano S."/>
            <person name="Moriya S."/>
            <person name="Momiyama H."/>
            <person name="Satoh N."/>
            <person name="Takami S."/>
            <person name="Terashima Y."/>
            <person name="Suzuki O."/>
            <person name="Nakagawa S."/>
            <person name="Senoh A."/>
            <person name="Mizoguchi H."/>
            <person name="Goto Y."/>
            <person name="Shimizu F."/>
            <person name="Wakebe H."/>
            <person name="Hishigaki H."/>
            <person name="Watanabe T."/>
            <person name="Sugiyama A."/>
            <person name="Takemoto M."/>
            <person name="Kawakami B."/>
            <person name="Yamazaki M."/>
            <person name="Watanabe K."/>
            <person name="Kumagai A."/>
            <person name="Itakura S."/>
            <person name="Fukuzumi Y."/>
            <person name="Fujimori Y."/>
            <person name="Komiyama M."/>
            <person name="Tashiro H."/>
            <person name="Tanigami A."/>
            <person name="Fujiwara T."/>
            <person name="Ono T."/>
            <person name="Yamada K."/>
            <person name="Fujii Y."/>
            <person name="Ozaki K."/>
            <person name="Hirao M."/>
            <person name="Ohmori Y."/>
            <person name="Kawabata A."/>
            <person name="Hikiji T."/>
            <person name="Kobatake N."/>
            <person name="Inagaki H."/>
            <person name="Ikema Y."/>
            <person name="Okamoto S."/>
            <person name="Okitani R."/>
            <person name="Kawakami T."/>
            <person name="Noguchi S."/>
            <person name="Itoh T."/>
            <person name="Shigeta K."/>
            <person name="Senba T."/>
            <person name="Matsumura K."/>
            <person name="Nakajima Y."/>
            <person name="Mizuno T."/>
            <person name="Morinaga M."/>
            <person name="Sasaki M."/>
            <person name="Togashi T."/>
            <person name="Oyama M."/>
            <person name="Hata H."/>
            <person name="Watanabe M."/>
            <person name="Komatsu T."/>
            <person name="Mizushima-Sugano J."/>
            <person name="Satoh T."/>
            <person name="Shirai Y."/>
            <person name="Takahashi Y."/>
            <person name="Nakagawa K."/>
            <person name="Okumura K."/>
            <person name="Nagase T."/>
            <person name="Nomura N."/>
            <person name="Kikuchi H."/>
            <person name="Masuho Y."/>
            <person name="Yamashita R."/>
            <person name="Nakai K."/>
            <person name="Yada T."/>
            <person name="Nakamura Y."/>
            <person name="Ohara O."/>
            <person name="Isogai T."/>
            <person name="Sugano S."/>
        </authorList>
    </citation>
    <scope>NUCLEOTIDE SEQUENCE [LARGE SCALE MRNA]</scope>
    <source>
        <tissue>Amygdala</tissue>
    </source>
</reference>
<reference key="4">
    <citation type="submission" date="2005-09" db="EMBL/GenBank/DDBJ databases">
        <authorList>
            <person name="Mural R.J."/>
            <person name="Istrail S."/>
            <person name="Sutton G.G."/>
            <person name="Florea L."/>
            <person name="Halpern A.L."/>
            <person name="Mobarry C.M."/>
            <person name="Lippert R."/>
            <person name="Walenz B."/>
            <person name="Shatkay H."/>
            <person name="Dew I."/>
            <person name="Miller J.R."/>
            <person name="Flanigan M.J."/>
            <person name="Edwards N.J."/>
            <person name="Bolanos R."/>
            <person name="Fasulo D."/>
            <person name="Halldorsson B.V."/>
            <person name="Hannenhalli S."/>
            <person name="Turner R."/>
            <person name="Yooseph S."/>
            <person name="Lu F."/>
            <person name="Nusskern D.R."/>
            <person name="Shue B.C."/>
            <person name="Zheng X.H."/>
            <person name="Zhong F."/>
            <person name="Delcher A.L."/>
            <person name="Huson D.H."/>
            <person name="Kravitz S.A."/>
            <person name="Mouchard L."/>
            <person name="Reinert K."/>
            <person name="Remington K.A."/>
            <person name="Clark A.G."/>
            <person name="Waterman M.S."/>
            <person name="Eichler E.E."/>
            <person name="Adams M.D."/>
            <person name="Hunkapiller M.W."/>
            <person name="Myers E.W."/>
            <person name="Venter J.C."/>
        </authorList>
    </citation>
    <scope>NUCLEOTIDE SEQUENCE [LARGE SCALE GENOMIC DNA]</scope>
</reference>
<reference key="5">
    <citation type="journal article" date="2004" name="Genome Res.">
        <title>The status, quality, and expansion of the NIH full-length cDNA project: the Mammalian Gene Collection (MGC).</title>
        <authorList>
            <consortium name="The MGC Project Team"/>
        </authorList>
    </citation>
    <scope>NUCLEOTIDE SEQUENCE [LARGE SCALE MRNA]</scope>
    <source>
        <tissue>Hippocampus</tissue>
    </source>
</reference>
<reference key="6">
    <citation type="journal article" date="2003" name="Nat. Neurosci.">
        <title>The netrin-G1 ligand NGL-1 promotes the outgrowth of thalamocortical axons.</title>
        <authorList>
            <person name="Lin J.C."/>
            <person name="Ho W.-H."/>
            <person name="Gurney A.L."/>
            <person name="Rosenthal A."/>
        </authorList>
    </citation>
    <scope>FUNCTION</scope>
    <scope>INTERACTION WITH NTNG1</scope>
    <scope>SUBCELLULAR LOCATION</scope>
    <scope>TISSUE SPECIFICITY</scope>
</reference>
<reference key="7">
    <citation type="journal article" date="2011" name="EMBO J.">
        <title>Structural basis for cell surface patterning through NetrinG-NGL interactions.</title>
        <authorList>
            <person name="Seiradake E."/>
            <person name="Coles C.H."/>
            <person name="Perestenko P.V."/>
            <person name="Harlos K."/>
            <person name="McIlhinney R.A."/>
            <person name="Aricescu A.R."/>
            <person name="Jones E.Y."/>
        </authorList>
    </citation>
    <scope>X-RAY CRYSTALLOGRAPHY (3.25 ANGSTROMS) OF 44-444 IN COMPLEX WITH NTNG1</scope>
    <scope>SUBCELLULAR LOCATION</scope>
</reference>
<feature type="signal peptide" evidence="2">
    <location>
        <begin position="1"/>
        <end position="44"/>
    </location>
</feature>
<feature type="chain" id="PRO_0000015108" description="Leucine-rich repeat-containing protein 4C">
    <location>
        <begin position="45"/>
        <end position="640"/>
    </location>
</feature>
<feature type="transmembrane region" description="Helical" evidence="2">
    <location>
        <begin position="528"/>
        <end position="548"/>
    </location>
</feature>
<feature type="domain" description="LRRNT">
    <location>
        <begin position="45"/>
        <end position="76"/>
    </location>
</feature>
<feature type="repeat" description="LRR 1">
    <location>
        <begin position="77"/>
        <end position="98"/>
    </location>
</feature>
<feature type="repeat" description="LRR 2">
    <location>
        <begin position="101"/>
        <end position="122"/>
    </location>
</feature>
<feature type="repeat" description="LRR 3">
    <location>
        <begin position="125"/>
        <end position="146"/>
    </location>
</feature>
<feature type="repeat" description="LRR 4">
    <location>
        <begin position="149"/>
        <end position="170"/>
    </location>
</feature>
<feature type="repeat" description="LRR 5">
    <location>
        <begin position="173"/>
        <end position="195"/>
    </location>
</feature>
<feature type="repeat" description="LRR 6">
    <location>
        <begin position="198"/>
        <end position="219"/>
    </location>
</feature>
<feature type="repeat" description="LRR 7">
    <location>
        <begin position="220"/>
        <end position="241"/>
    </location>
</feature>
<feature type="repeat" description="LRR 8">
    <location>
        <begin position="244"/>
        <end position="265"/>
    </location>
</feature>
<feature type="repeat" description="LRR 9">
    <location>
        <begin position="268"/>
        <end position="289"/>
    </location>
</feature>
<feature type="domain" description="LRRCT">
    <location>
        <begin position="301"/>
        <end position="353"/>
    </location>
</feature>
<feature type="domain" description="Ig-like C2-type">
    <location>
        <begin position="354"/>
        <end position="442"/>
    </location>
</feature>
<feature type="region of interest" description="Disordered" evidence="4">
    <location>
        <begin position="463"/>
        <end position="483"/>
    </location>
</feature>
<feature type="modified residue" description="Phosphoserine" evidence="1">
    <location>
        <position position="631"/>
    </location>
</feature>
<feature type="disulfide bond" evidence="3">
    <location>
        <begin position="375"/>
        <end position="426"/>
    </location>
</feature>
<feature type="strand" evidence="7">
    <location>
        <begin position="49"/>
        <end position="53"/>
    </location>
</feature>
<feature type="strand" evidence="7">
    <location>
        <begin position="59"/>
        <end position="61"/>
    </location>
</feature>
<feature type="strand" evidence="7">
    <location>
        <begin position="79"/>
        <end position="82"/>
    </location>
</feature>
<feature type="turn" evidence="7">
    <location>
        <begin position="93"/>
        <end position="96"/>
    </location>
</feature>
<feature type="strand" evidence="7">
    <location>
        <begin position="104"/>
        <end position="106"/>
    </location>
</feature>
<feature type="helix" evidence="7">
    <location>
        <begin position="117"/>
        <end position="120"/>
    </location>
</feature>
<feature type="strand" evidence="7">
    <location>
        <begin position="128"/>
        <end position="130"/>
    </location>
</feature>
<feature type="turn" evidence="7">
    <location>
        <begin position="141"/>
        <end position="143"/>
    </location>
</feature>
<feature type="strand" evidence="7">
    <location>
        <begin position="152"/>
        <end position="154"/>
    </location>
</feature>
<feature type="turn" evidence="7">
    <location>
        <begin position="165"/>
        <end position="170"/>
    </location>
</feature>
<feature type="strand" evidence="7">
    <location>
        <begin position="176"/>
        <end position="178"/>
    </location>
</feature>
<feature type="turn" evidence="7">
    <location>
        <begin position="190"/>
        <end position="195"/>
    </location>
</feature>
<feature type="strand" evidence="7">
    <location>
        <begin position="201"/>
        <end position="203"/>
    </location>
</feature>
<feature type="strand" evidence="7">
    <location>
        <begin position="223"/>
        <end position="225"/>
    </location>
</feature>
<feature type="turn" evidence="7">
    <location>
        <begin position="236"/>
        <end position="241"/>
    </location>
</feature>
<feature type="strand" evidence="7">
    <location>
        <begin position="247"/>
        <end position="249"/>
    </location>
</feature>
<feature type="strand" evidence="7">
    <location>
        <begin position="271"/>
        <end position="273"/>
    </location>
</feature>
<feature type="turn" evidence="7">
    <location>
        <begin position="284"/>
        <end position="287"/>
    </location>
</feature>
<feature type="strand" evidence="7">
    <location>
        <begin position="295"/>
        <end position="297"/>
    </location>
</feature>
<feature type="helix" evidence="7">
    <location>
        <begin position="310"/>
        <end position="317"/>
    </location>
</feature>
<feature type="strand" evidence="7">
    <location>
        <begin position="329"/>
        <end position="333"/>
    </location>
</feature>
<feature type="turn" evidence="7">
    <location>
        <begin position="334"/>
        <end position="338"/>
    </location>
</feature>
<feature type="strand" evidence="7">
    <location>
        <begin position="356"/>
        <end position="358"/>
    </location>
</feature>
<feature type="strand" evidence="7">
    <location>
        <begin position="363"/>
        <end position="366"/>
    </location>
</feature>
<feature type="strand" evidence="7">
    <location>
        <begin position="376"/>
        <end position="379"/>
    </location>
</feature>
<feature type="strand" evidence="7">
    <location>
        <begin position="382"/>
        <end position="387"/>
    </location>
</feature>
<feature type="strand" evidence="7">
    <location>
        <begin position="393"/>
        <end position="398"/>
    </location>
</feature>
<feature type="strand" evidence="7">
    <location>
        <begin position="401"/>
        <end position="405"/>
    </location>
</feature>
<feature type="strand" evidence="7">
    <location>
        <begin position="411"/>
        <end position="415"/>
    </location>
</feature>
<feature type="strand" evidence="7">
    <location>
        <begin position="422"/>
        <end position="429"/>
    </location>
</feature>
<feature type="strand" evidence="7">
    <location>
        <begin position="434"/>
        <end position="444"/>
    </location>
</feature>
<proteinExistence type="evidence at protein level"/>
<gene>
    <name type="primary">LRRC4C</name>
    <name type="synonym">KIAA1580</name>
    <name type="synonym">NGL1</name>
    <name type="ORF">UNQ292/PRO331</name>
</gene>
<evidence type="ECO:0000250" key="1">
    <source>
        <dbReference type="UniProtKB" id="Q8C031"/>
    </source>
</evidence>
<evidence type="ECO:0000255" key="2"/>
<evidence type="ECO:0000255" key="3">
    <source>
        <dbReference type="PROSITE-ProRule" id="PRU00114"/>
    </source>
</evidence>
<evidence type="ECO:0000256" key="4">
    <source>
        <dbReference type="SAM" id="MobiDB-lite"/>
    </source>
</evidence>
<evidence type="ECO:0000269" key="5">
    <source>
    </source>
</evidence>
<evidence type="ECO:0000269" key="6">
    <source>
    </source>
</evidence>
<evidence type="ECO:0007829" key="7">
    <source>
        <dbReference type="PDB" id="3ZYJ"/>
    </source>
</evidence>